<accession>P56723</accession>
<dbReference type="EMBL" id="L43967">
    <property type="protein sequence ID" value="AAC71429.1"/>
    <property type="molecule type" value="Genomic_DNA"/>
</dbReference>
<dbReference type="PIR" id="T09720">
    <property type="entry name" value="T09720"/>
</dbReference>
<dbReference type="RefSeq" id="WP_009885748.1">
    <property type="nucleotide sequence ID" value="NC_000908.2"/>
</dbReference>
<dbReference type="SMR" id="P56723"/>
<dbReference type="STRING" id="243273.MG_480"/>
<dbReference type="GeneID" id="88282343"/>
<dbReference type="KEGG" id="mge:MG_480"/>
<dbReference type="eggNOG" id="ENOG5030MXS">
    <property type="taxonomic scope" value="Bacteria"/>
</dbReference>
<dbReference type="HOGENOM" id="CLU_1260278_0_0_14"/>
<dbReference type="InParanoid" id="P56723"/>
<dbReference type="OrthoDB" id="400299at2"/>
<dbReference type="BioCyc" id="MGEN243273:G1GJ2-244-MONOMER"/>
<dbReference type="Proteomes" id="UP000000807">
    <property type="component" value="Chromosome"/>
</dbReference>
<dbReference type="InterPro" id="IPR035215">
    <property type="entry name" value="DUF5454"/>
</dbReference>
<dbReference type="Pfam" id="PF17535">
    <property type="entry name" value="DUF5454"/>
    <property type="match status" value="1"/>
</dbReference>
<reference key="1">
    <citation type="journal article" date="1995" name="Science">
        <title>The minimal gene complement of Mycoplasma genitalium.</title>
        <authorList>
            <person name="Fraser C.M."/>
            <person name="Gocayne J.D."/>
            <person name="White O."/>
            <person name="Adams M.D."/>
            <person name="Clayton R.A."/>
            <person name="Fleischmann R.D."/>
            <person name="Bult C.J."/>
            <person name="Kerlavage A.R."/>
            <person name="Sutton G.G."/>
            <person name="Kelley J.M."/>
            <person name="Fritchman J.L."/>
            <person name="Weidman J.F."/>
            <person name="Small K.V."/>
            <person name="Sandusky M."/>
            <person name="Fuhrmann J.L."/>
            <person name="Nguyen D.T."/>
            <person name="Utterback T.R."/>
            <person name="Saudek D.M."/>
            <person name="Phillips C.A."/>
            <person name="Merrick J.M."/>
            <person name="Tomb J.-F."/>
            <person name="Dougherty B.A."/>
            <person name="Bott K.F."/>
            <person name="Hu P.-C."/>
            <person name="Lucier T.S."/>
            <person name="Peterson S.N."/>
            <person name="Smith H.O."/>
            <person name="Hutchison C.A. III"/>
            <person name="Venter J.C."/>
        </authorList>
    </citation>
    <scope>NUCLEOTIDE SEQUENCE [LARGE SCALE GENOMIC DNA]</scope>
    <source>
        <strain>ATCC 33530 / DSM 19775 / NCTC 10195 / G37</strain>
    </source>
</reference>
<reference key="2">
    <citation type="submission" date="1998-10" db="EMBL/GenBank/DDBJ databases">
        <authorList>
            <person name="Fraser C.M."/>
            <person name="Gocayne J.D."/>
            <person name="White O."/>
            <person name="Adams M.D."/>
            <person name="Clayton R.A."/>
            <person name="Fleischmann R.D."/>
            <person name="Bult C.J."/>
            <person name="Kerlavage A.R."/>
            <person name="Sutton G.G."/>
            <person name="Kelley J.M."/>
            <person name="Fritchman J.L."/>
            <person name="Weidman J.F."/>
            <person name="Small K.V."/>
            <person name="Sandusky M."/>
            <person name="Fuhrmann J.L."/>
            <person name="Nguyen D.T."/>
            <person name="Utterback T.R."/>
            <person name="Saudek D.M."/>
            <person name="Phillips C.A."/>
            <person name="Merrick J.M."/>
            <person name="Tomb J.-F."/>
            <person name="Dougherty B.A."/>
            <person name="Bott K.F."/>
            <person name="Hu P.-C."/>
            <person name="Lucier T.S."/>
            <person name="Peterson S.N."/>
            <person name="Smith H.O."/>
            <person name="Hutchison C.A. III"/>
            <person name="Venter J.C."/>
        </authorList>
    </citation>
    <scope>IDENTIFICATION</scope>
</reference>
<feature type="chain" id="PRO_0000210456" description="Uncharacterized protein MG210.1">
    <location>
        <begin position="1"/>
        <end position="219"/>
    </location>
</feature>
<protein>
    <recommendedName>
        <fullName>Uncharacterized protein MG210.1</fullName>
    </recommendedName>
</protein>
<name>Y210A_MYCGE</name>
<gene>
    <name type="ordered locus">MG210.1</name>
</gene>
<proteinExistence type="predicted"/>
<sequence length="219" mass="25971">MGKTKNKSDWQIFLEDYRFYFETDFDWVTYLNNCLNSYPDFDIIKFIKKYGPECEKSFLSWQSKAKSDVYSELTNKIKKQQFSEQLIYQLVQLDALRTNYLIGSLFSDNKTQRKLLKRSWKNAKKEGYTKQEWLMILVGLPFEKGAYHKQLYDHSRQEILDLTEVIKKLYLKTETNNDKLEFAATTSKTTAQLTKTMPLNSSDLDKDLMEFSGEKWGDN</sequence>
<keyword id="KW-1185">Reference proteome</keyword>
<organism>
    <name type="scientific">Mycoplasma genitalium (strain ATCC 33530 / DSM 19775 / NCTC 10195 / G37)</name>
    <name type="common">Mycoplasmoides genitalium</name>
    <dbReference type="NCBI Taxonomy" id="243273"/>
    <lineage>
        <taxon>Bacteria</taxon>
        <taxon>Bacillati</taxon>
        <taxon>Mycoplasmatota</taxon>
        <taxon>Mycoplasmoidales</taxon>
        <taxon>Mycoplasmoidaceae</taxon>
        <taxon>Mycoplasmoides</taxon>
    </lineage>
</organism>